<accession>Q1IQS9</accession>
<reference key="1">
    <citation type="journal article" date="2009" name="Appl. Environ. Microbiol.">
        <title>Three genomes from the phylum Acidobacteria provide insight into the lifestyles of these microorganisms in soils.</title>
        <authorList>
            <person name="Ward N.L."/>
            <person name="Challacombe J.F."/>
            <person name="Janssen P.H."/>
            <person name="Henrissat B."/>
            <person name="Coutinho P.M."/>
            <person name="Wu M."/>
            <person name="Xie G."/>
            <person name="Haft D.H."/>
            <person name="Sait M."/>
            <person name="Badger J."/>
            <person name="Barabote R.D."/>
            <person name="Bradley B."/>
            <person name="Brettin T.S."/>
            <person name="Brinkac L.M."/>
            <person name="Bruce D."/>
            <person name="Creasy T."/>
            <person name="Daugherty S.C."/>
            <person name="Davidsen T.M."/>
            <person name="DeBoy R.T."/>
            <person name="Detter J.C."/>
            <person name="Dodson R.J."/>
            <person name="Durkin A.S."/>
            <person name="Ganapathy A."/>
            <person name="Gwinn-Giglio M."/>
            <person name="Han C.S."/>
            <person name="Khouri H."/>
            <person name="Kiss H."/>
            <person name="Kothari S.P."/>
            <person name="Madupu R."/>
            <person name="Nelson K.E."/>
            <person name="Nelson W.C."/>
            <person name="Paulsen I."/>
            <person name="Penn K."/>
            <person name="Ren Q."/>
            <person name="Rosovitz M.J."/>
            <person name="Selengut J.D."/>
            <person name="Shrivastava S."/>
            <person name="Sullivan S.A."/>
            <person name="Tapia R."/>
            <person name="Thompson L.S."/>
            <person name="Watkins K.L."/>
            <person name="Yang Q."/>
            <person name="Yu C."/>
            <person name="Zafar N."/>
            <person name="Zhou L."/>
            <person name="Kuske C.R."/>
        </authorList>
    </citation>
    <scope>NUCLEOTIDE SEQUENCE [LARGE SCALE GENOMIC DNA]</scope>
    <source>
        <strain>Ellin345</strain>
    </source>
</reference>
<keyword id="KW-0145">Chemotaxis</keyword>
<keyword id="KW-0963">Cytoplasm</keyword>
<keyword id="KW-0378">Hydrolase</keyword>
<keyword id="KW-0597">Phosphoprotein</keyword>
<keyword id="KW-1185">Reference proteome</keyword>
<proteinExistence type="inferred from homology"/>
<name>CHEB2_KORVE</name>
<comment type="function">
    <text evidence="1">Involved in chemotaxis. Part of a chemotaxis signal transduction system that modulates chemotaxis in response to various stimuli. Catalyzes the demethylation of specific methylglutamate residues introduced into the chemoreceptors (methyl-accepting chemotaxis proteins or MCP) by CheR. Also mediates the irreversible deamidation of specific glutamine residues to glutamic acid.</text>
</comment>
<comment type="catalytic activity">
    <reaction evidence="1">
        <text>[protein]-L-glutamate 5-O-methyl ester + H2O = L-glutamyl-[protein] + methanol + H(+)</text>
        <dbReference type="Rhea" id="RHEA:23236"/>
        <dbReference type="Rhea" id="RHEA-COMP:10208"/>
        <dbReference type="Rhea" id="RHEA-COMP:10311"/>
        <dbReference type="ChEBI" id="CHEBI:15377"/>
        <dbReference type="ChEBI" id="CHEBI:15378"/>
        <dbReference type="ChEBI" id="CHEBI:17790"/>
        <dbReference type="ChEBI" id="CHEBI:29973"/>
        <dbReference type="ChEBI" id="CHEBI:82795"/>
        <dbReference type="EC" id="3.1.1.61"/>
    </reaction>
</comment>
<comment type="catalytic activity">
    <reaction evidence="1">
        <text>L-glutaminyl-[protein] + H2O = L-glutamyl-[protein] + NH4(+)</text>
        <dbReference type="Rhea" id="RHEA:16441"/>
        <dbReference type="Rhea" id="RHEA-COMP:10207"/>
        <dbReference type="Rhea" id="RHEA-COMP:10208"/>
        <dbReference type="ChEBI" id="CHEBI:15377"/>
        <dbReference type="ChEBI" id="CHEBI:28938"/>
        <dbReference type="ChEBI" id="CHEBI:29973"/>
        <dbReference type="ChEBI" id="CHEBI:30011"/>
        <dbReference type="EC" id="3.5.1.44"/>
    </reaction>
</comment>
<comment type="subcellular location">
    <subcellularLocation>
        <location evidence="1">Cytoplasm</location>
    </subcellularLocation>
</comment>
<comment type="domain">
    <text evidence="1">Contains a C-terminal catalytic domain, and an N-terminal region which modulates catalytic activity.</text>
</comment>
<comment type="PTM">
    <text evidence="1">Phosphorylated by CheA. Phosphorylation of the N-terminal regulatory domain activates the methylesterase activity.</text>
</comment>
<comment type="similarity">
    <text evidence="1">Belongs to the CheB family.</text>
</comment>
<evidence type="ECO:0000255" key="1">
    <source>
        <dbReference type="HAMAP-Rule" id="MF_00099"/>
    </source>
</evidence>
<feature type="chain" id="PRO_0000264254" description="Protein-glutamate methylesterase/protein-glutamine glutaminase 2">
    <location>
        <begin position="1"/>
        <end position="363"/>
    </location>
</feature>
<feature type="domain" description="Response regulatory" evidence="1">
    <location>
        <begin position="7"/>
        <end position="124"/>
    </location>
</feature>
<feature type="domain" description="CheB-type methylesterase" evidence="1">
    <location>
        <begin position="160"/>
        <end position="357"/>
    </location>
</feature>
<feature type="active site" evidence="1">
    <location>
        <position position="176"/>
    </location>
</feature>
<feature type="active site" evidence="1">
    <location>
        <position position="203"/>
    </location>
</feature>
<feature type="active site" evidence="1">
    <location>
        <position position="299"/>
    </location>
</feature>
<feature type="modified residue" description="4-aspartylphosphate" evidence="1">
    <location>
        <position position="58"/>
    </location>
</feature>
<dbReference type="EC" id="3.1.1.61" evidence="1"/>
<dbReference type="EC" id="3.5.1.44" evidence="1"/>
<dbReference type="EMBL" id="CP000360">
    <property type="protein sequence ID" value="ABF40771.1"/>
    <property type="molecule type" value="Genomic_DNA"/>
</dbReference>
<dbReference type="RefSeq" id="WP_011522573.1">
    <property type="nucleotide sequence ID" value="NC_008009.1"/>
</dbReference>
<dbReference type="SMR" id="Q1IQS9"/>
<dbReference type="STRING" id="204669.Acid345_1770"/>
<dbReference type="EnsemblBacteria" id="ABF40771">
    <property type="protein sequence ID" value="ABF40771"/>
    <property type="gene ID" value="Acid345_1770"/>
</dbReference>
<dbReference type="KEGG" id="aba:Acid345_1770"/>
<dbReference type="eggNOG" id="COG2201">
    <property type="taxonomic scope" value="Bacteria"/>
</dbReference>
<dbReference type="HOGENOM" id="CLU_000445_51_0_0"/>
<dbReference type="OrthoDB" id="9793421at2"/>
<dbReference type="Proteomes" id="UP000002432">
    <property type="component" value="Chromosome"/>
</dbReference>
<dbReference type="GO" id="GO:0005737">
    <property type="term" value="C:cytoplasm"/>
    <property type="evidence" value="ECO:0007669"/>
    <property type="project" value="UniProtKB-SubCell"/>
</dbReference>
<dbReference type="GO" id="GO:0000156">
    <property type="term" value="F:phosphorelay response regulator activity"/>
    <property type="evidence" value="ECO:0007669"/>
    <property type="project" value="InterPro"/>
</dbReference>
<dbReference type="GO" id="GO:0008984">
    <property type="term" value="F:protein-glutamate methylesterase activity"/>
    <property type="evidence" value="ECO:0007669"/>
    <property type="project" value="UniProtKB-UniRule"/>
</dbReference>
<dbReference type="GO" id="GO:0050568">
    <property type="term" value="F:protein-glutamine glutaminase activity"/>
    <property type="evidence" value="ECO:0007669"/>
    <property type="project" value="UniProtKB-UniRule"/>
</dbReference>
<dbReference type="GO" id="GO:0006935">
    <property type="term" value="P:chemotaxis"/>
    <property type="evidence" value="ECO:0007669"/>
    <property type="project" value="UniProtKB-UniRule"/>
</dbReference>
<dbReference type="CDD" id="cd16432">
    <property type="entry name" value="CheB_Rec"/>
    <property type="match status" value="1"/>
</dbReference>
<dbReference type="CDD" id="cd17541">
    <property type="entry name" value="REC_CheB-like"/>
    <property type="match status" value="1"/>
</dbReference>
<dbReference type="Gene3D" id="3.40.50.2300">
    <property type="match status" value="1"/>
</dbReference>
<dbReference type="Gene3D" id="3.40.50.180">
    <property type="entry name" value="Methylesterase CheB, C-terminal domain"/>
    <property type="match status" value="1"/>
</dbReference>
<dbReference type="HAMAP" id="MF_00099">
    <property type="entry name" value="CheB_chemtxs"/>
    <property type="match status" value="1"/>
</dbReference>
<dbReference type="InterPro" id="IPR008248">
    <property type="entry name" value="CheB-like"/>
</dbReference>
<dbReference type="InterPro" id="IPR035909">
    <property type="entry name" value="CheB_C"/>
</dbReference>
<dbReference type="InterPro" id="IPR011006">
    <property type="entry name" value="CheY-like_superfamily"/>
</dbReference>
<dbReference type="InterPro" id="IPR000673">
    <property type="entry name" value="Sig_transdc_resp-reg_Me-estase"/>
</dbReference>
<dbReference type="InterPro" id="IPR001789">
    <property type="entry name" value="Sig_transdc_resp-reg_receiver"/>
</dbReference>
<dbReference type="NCBIfam" id="NF001965">
    <property type="entry name" value="PRK00742.1"/>
    <property type="match status" value="1"/>
</dbReference>
<dbReference type="NCBIfam" id="NF009206">
    <property type="entry name" value="PRK12555.1"/>
    <property type="match status" value="1"/>
</dbReference>
<dbReference type="PANTHER" id="PTHR42872">
    <property type="entry name" value="PROTEIN-GLUTAMATE METHYLESTERASE/PROTEIN-GLUTAMINE GLUTAMINASE"/>
    <property type="match status" value="1"/>
</dbReference>
<dbReference type="PANTHER" id="PTHR42872:SF6">
    <property type="entry name" value="PROTEIN-GLUTAMATE METHYLESTERASE_PROTEIN-GLUTAMINE GLUTAMINASE"/>
    <property type="match status" value="1"/>
</dbReference>
<dbReference type="Pfam" id="PF01339">
    <property type="entry name" value="CheB_methylest"/>
    <property type="match status" value="1"/>
</dbReference>
<dbReference type="Pfam" id="PF00072">
    <property type="entry name" value="Response_reg"/>
    <property type="match status" value="1"/>
</dbReference>
<dbReference type="PIRSF" id="PIRSF000876">
    <property type="entry name" value="RR_chemtxs_CheB"/>
    <property type="match status" value="1"/>
</dbReference>
<dbReference type="SMART" id="SM00448">
    <property type="entry name" value="REC"/>
    <property type="match status" value="1"/>
</dbReference>
<dbReference type="SUPFAM" id="SSF52172">
    <property type="entry name" value="CheY-like"/>
    <property type="match status" value="1"/>
</dbReference>
<dbReference type="SUPFAM" id="SSF52738">
    <property type="entry name" value="Methylesterase CheB, C-terminal domain"/>
    <property type="match status" value="1"/>
</dbReference>
<dbReference type="PROSITE" id="PS50122">
    <property type="entry name" value="CHEB"/>
    <property type="match status" value="1"/>
</dbReference>
<dbReference type="PROSITE" id="PS50110">
    <property type="entry name" value="RESPONSE_REGULATORY"/>
    <property type="match status" value="1"/>
</dbReference>
<gene>
    <name evidence="1" type="primary">cheB2</name>
    <name type="ordered locus">Acid345_1770</name>
</gene>
<sequence length="363" mass="38701">MRTTPIRVLVVDDSALMRKMITQMLQKDPAIEVIGTAMDGAFGLKKIEELRPDVVTLDLEMPNMDGMEMLRHITKRGQTPVIVVSAHTTQGARETFKALQLGAFDFVAKPQEGSSLTLENVADEIIAKIKVAGAARKPRPQIATVDEALLRSARKPARPPVASRTTPSKIIAIGISTGGPNALLFMLSQLPADFAGTILIVQHMPEGFTQMFSNRLAESCAIEVKEAASGDLLLAGRALICPGNRHMRVRRMPMGDVVVLSDEPPVNGHRPSADVLFRSVAQEFGPKVVALIMTGMGEDGADAIGAVKAAGGLAVAQDEGSSVVFGMPKVAIERGNVNRVVALDALPNLLMVQSAAQRVSSFD</sequence>
<protein>
    <recommendedName>
        <fullName evidence="1">Protein-glutamate methylesterase/protein-glutamine glutaminase 2</fullName>
        <ecNumber evidence="1">3.1.1.61</ecNumber>
        <ecNumber evidence="1">3.5.1.44</ecNumber>
    </recommendedName>
</protein>
<organism>
    <name type="scientific">Koribacter versatilis (strain Ellin345)</name>
    <dbReference type="NCBI Taxonomy" id="204669"/>
    <lineage>
        <taxon>Bacteria</taxon>
        <taxon>Pseudomonadati</taxon>
        <taxon>Acidobacteriota</taxon>
        <taxon>Terriglobia</taxon>
        <taxon>Terriglobales</taxon>
        <taxon>Candidatus Korobacteraceae</taxon>
        <taxon>Candidatus Korobacter</taxon>
    </lineage>
</organism>